<comment type="similarity">
    <text evidence="1">Belongs to the BlaI transcriptional regulatory family.</text>
</comment>
<evidence type="ECO:0000305" key="1"/>
<proteinExistence type="inferred from homology"/>
<feature type="chain" id="PRO_0000062801" description="Uncharacterized 16.5 kDa protein in ptsI 3'region">
    <location>
        <begin position="1"/>
        <end position="146"/>
    </location>
</feature>
<protein>
    <recommendedName>
        <fullName>Uncharacterized 16.5 kDa protein in ptsI 3'region</fullName>
    </recommendedName>
    <alternativeName>
        <fullName>ORFY</fullName>
    </alternativeName>
</protein>
<dbReference type="EMBL" id="U82366">
    <property type="protein sequence ID" value="AAC45392.1"/>
    <property type="molecule type" value="Genomic_DNA"/>
</dbReference>
<dbReference type="SMR" id="O07127"/>
<dbReference type="GO" id="GO:0003677">
    <property type="term" value="F:DNA binding"/>
    <property type="evidence" value="ECO:0007669"/>
    <property type="project" value="UniProtKB-KW"/>
</dbReference>
<dbReference type="GO" id="GO:0045892">
    <property type="term" value="P:negative regulation of DNA-templated transcription"/>
    <property type="evidence" value="ECO:0007669"/>
    <property type="project" value="InterPro"/>
</dbReference>
<dbReference type="Gene3D" id="1.10.10.10">
    <property type="entry name" value="Winged helix-like DNA-binding domain superfamily/Winged helix DNA-binding domain"/>
    <property type="match status" value="1"/>
</dbReference>
<dbReference type="InterPro" id="IPR005650">
    <property type="entry name" value="BlaI_family"/>
</dbReference>
<dbReference type="InterPro" id="IPR014071">
    <property type="entry name" value="Cu_transp_CopY/TcrY"/>
</dbReference>
<dbReference type="InterPro" id="IPR036388">
    <property type="entry name" value="WH-like_DNA-bd_sf"/>
</dbReference>
<dbReference type="InterPro" id="IPR036390">
    <property type="entry name" value="WH_DNA-bd_sf"/>
</dbReference>
<dbReference type="NCBIfam" id="TIGR02698">
    <property type="entry name" value="CopY_TcrY"/>
    <property type="match status" value="1"/>
</dbReference>
<dbReference type="Pfam" id="PF03965">
    <property type="entry name" value="Penicillinase_R"/>
    <property type="match status" value="1"/>
</dbReference>
<dbReference type="PIRSF" id="PIRSF019455">
    <property type="entry name" value="CopR_AtkY"/>
    <property type="match status" value="1"/>
</dbReference>
<dbReference type="SUPFAM" id="SSF46785">
    <property type="entry name" value="Winged helix' DNA-binding domain"/>
    <property type="match status" value="1"/>
</dbReference>
<reference key="1">
    <citation type="journal article" date="1997" name="Appl. Environ. Microbiol.">
        <title>Molecular cloning and analysis of the ptsHI operon in Lactobacillus sake.</title>
        <authorList>
            <person name="Stentz R."/>
            <person name="Lauret R."/>
            <person name="Ehrlich S.D."/>
            <person name="Morel-Deville F."/>
            <person name="Zagorec M."/>
        </authorList>
    </citation>
    <scope>NUCLEOTIDE SEQUENCE [GENOMIC DNA]</scope>
    <source>
        <strain>160*1</strain>
    </source>
</reference>
<organism>
    <name type="scientific">Latilactobacillus sakei</name>
    <name type="common">Lactobacillus sakei</name>
    <dbReference type="NCBI Taxonomy" id="1599"/>
    <lineage>
        <taxon>Bacteria</taxon>
        <taxon>Bacillati</taxon>
        <taxon>Bacillota</taxon>
        <taxon>Bacilli</taxon>
        <taxon>Lactobacillales</taxon>
        <taxon>Lactobacillaceae</taxon>
        <taxon>Latilactobacillus</taxon>
    </lineage>
</organism>
<keyword id="KW-0238">DNA-binding</keyword>
<keyword id="KW-0804">Transcription</keyword>
<keyword id="KW-0805">Transcription regulation</keyword>
<sequence>MAENTNEITTSEWEVMRIVWSLGQVNSRDLIDLLQPKRDWQDSTIKTLIGRLVKKGFLKTEKEGRRFNYTATVPEIEAMENATQSLFEHLCGMKKGQTLAALIDQTTLSQTDILQLQQLLTAKAATAPEKVACDCLPNKCDCEKEE</sequence>
<accession>O07127</accession>
<name>YPTY_LATSK</name>